<accession>P16726</accession>
<accession>Q7M6L5</accession>
<feature type="chain" id="PRO_0000116005" description="Capsid vertex component 2">
    <location>
        <begin position="1"/>
        <end position="642"/>
    </location>
</feature>
<feature type="region of interest" description="Interaction with major capsid protein/MCP" evidence="1">
    <location>
        <begin position="1"/>
        <end position="48"/>
    </location>
</feature>
<feature type="region of interest" description="Disordered" evidence="2">
    <location>
        <begin position="97"/>
        <end position="125"/>
    </location>
</feature>
<feature type="strand" evidence="4">
    <location>
        <begin position="7"/>
        <end position="10"/>
    </location>
</feature>
<feature type="helix" evidence="4">
    <location>
        <begin position="28"/>
        <end position="44"/>
    </location>
</feature>
<feature type="helix" evidence="4">
    <location>
        <begin position="48"/>
        <end position="91"/>
    </location>
</feature>
<feature type="strand" evidence="3">
    <location>
        <begin position="182"/>
        <end position="184"/>
    </location>
</feature>
<feature type="strand" evidence="3">
    <location>
        <begin position="193"/>
        <end position="197"/>
    </location>
</feature>
<feature type="helix" evidence="3">
    <location>
        <begin position="199"/>
        <end position="210"/>
    </location>
</feature>
<feature type="helix" evidence="3">
    <location>
        <begin position="213"/>
        <end position="215"/>
    </location>
</feature>
<feature type="helix" evidence="3">
    <location>
        <begin position="220"/>
        <end position="230"/>
    </location>
</feature>
<feature type="helix" evidence="3">
    <location>
        <begin position="233"/>
        <end position="238"/>
    </location>
</feature>
<feature type="helix" evidence="3">
    <location>
        <begin position="251"/>
        <end position="262"/>
    </location>
</feature>
<feature type="turn" evidence="3">
    <location>
        <begin position="263"/>
        <end position="265"/>
    </location>
</feature>
<feature type="helix" evidence="3">
    <location>
        <begin position="276"/>
        <end position="290"/>
    </location>
</feature>
<feature type="helix" evidence="3">
    <location>
        <begin position="301"/>
        <end position="306"/>
    </location>
</feature>
<feature type="helix" evidence="3">
    <location>
        <begin position="308"/>
        <end position="324"/>
    </location>
</feature>
<feature type="turn" evidence="3">
    <location>
        <begin position="332"/>
        <end position="334"/>
    </location>
</feature>
<feature type="turn" evidence="3">
    <location>
        <begin position="353"/>
        <end position="355"/>
    </location>
</feature>
<feature type="turn" evidence="3">
    <location>
        <begin position="359"/>
        <end position="364"/>
    </location>
</feature>
<feature type="helix" evidence="3">
    <location>
        <begin position="366"/>
        <end position="373"/>
    </location>
</feature>
<feature type="helix" evidence="3">
    <location>
        <begin position="388"/>
        <end position="396"/>
    </location>
</feature>
<feature type="helix" evidence="3">
    <location>
        <begin position="403"/>
        <end position="416"/>
    </location>
</feature>
<feature type="turn" evidence="3">
    <location>
        <begin position="423"/>
        <end position="425"/>
    </location>
</feature>
<feature type="helix" evidence="3">
    <location>
        <begin position="427"/>
        <end position="447"/>
    </location>
</feature>
<feature type="helix" evidence="3">
    <location>
        <begin position="462"/>
        <end position="466"/>
    </location>
</feature>
<feature type="turn" evidence="3">
    <location>
        <begin position="468"/>
        <end position="470"/>
    </location>
</feature>
<feature type="helix" evidence="3">
    <location>
        <begin position="497"/>
        <end position="504"/>
    </location>
</feature>
<feature type="helix" evidence="3">
    <location>
        <begin position="506"/>
        <end position="512"/>
    </location>
</feature>
<feature type="helix" evidence="3">
    <location>
        <begin position="518"/>
        <end position="521"/>
    </location>
</feature>
<feature type="helix" evidence="3">
    <location>
        <begin position="523"/>
        <end position="535"/>
    </location>
</feature>
<feature type="turn" evidence="3">
    <location>
        <begin position="540"/>
        <end position="542"/>
    </location>
</feature>
<feature type="helix" evidence="3">
    <location>
        <begin position="565"/>
        <end position="574"/>
    </location>
</feature>
<feature type="helix" evidence="3">
    <location>
        <begin position="580"/>
        <end position="603"/>
    </location>
</feature>
<feature type="helix" evidence="3">
    <location>
        <begin position="607"/>
        <end position="618"/>
    </location>
</feature>
<feature type="helix" evidence="3">
    <location>
        <begin position="624"/>
        <end position="633"/>
    </location>
</feature>
<gene>
    <name evidence="1" type="primary">CVC2</name>
    <name type="ordered locus">UL77</name>
</gene>
<protein>
    <recommendedName>
        <fullName evidence="1">Capsid vertex component 2</fullName>
    </recommendedName>
</protein>
<comment type="function">
    <text evidence="1">Capsid vertex-specific component that plays a role during viral DNA encapsidation, assuring correct genome cleavage and presumably stabilizing capsids that contain full-length viral genomes. Participates in the interaction between the capsid and the tegument through interaction with the large tegument protein/LTP.</text>
</comment>
<comment type="subunit">
    <text evidence="1">Heterodimerizes with CVC1. Interacts with major capsid protein/MCP and triplex capsid protein 1/TRX1 at the pentamer vertices. Interacts with the large tegument protein/LTP.</text>
</comment>
<comment type="subcellular location">
    <subcellularLocation>
        <location evidence="1">Virion</location>
    </subcellularLocation>
    <subcellularLocation>
        <location evidence="1">Host nucleus</location>
    </subcellularLocation>
</comment>
<comment type="similarity">
    <text evidence="1">Belongs to the herpesviridae CVC2 protein family.</text>
</comment>
<reference key="1">
    <citation type="journal article" date="1990" name="Curr. Top. Microbiol. Immunol.">
        <title>Analysis of the protein-coding content of the sequence of human cytomegalovirus strain AD169.</title>
        <authorList>
            <person name="Chee M.S."/>
            <person name="Bankier A.T."/>
            <person name="Beck S."/>
            <person name="Bohni R."/>
            <person name="Brown C.M."/>
            <person name="Cerny R."/>
            <person name="Horsnell T."/>
            <person name="Hutchison C.A. III"/>
            <person name="Kouzarides T."/>
            <person name="Martignetti J.A."/>
            <person name="Preddie E."/>
            <person name="Satchwell S.C."/>
            <person name="Tomlinson P."/>
            <person name="Weston K.M."/>
            <person name="Barrell B.G."/>
        </authorList>
    </citation>
    <scope>NUCLEOTIDE SEQUENCE [LARGE SCALE GENOMIC DNA]</scope>
</reference>
<reference key="2">
    <citation type="journal article" date="2003" name="J. Gen. Virol.">
        <title>The human cytomegalovirus genome revisited: comparison with the chimpanzee cytomegalovirus genome.</title>
        <authorList>
            <person name="Davison A.J."/>
            <person name="Dolan A."/>
            <person name="Akter P."/>
            <person name="Addison C."/>
            <person name="Dargan D.J."/>
            <person name="Alcendor D.J."/>
            <person name="McGeoch D.J."/>
            <person name="Hayward G.S."/>
        </authorList>
    </citation>
    <scope>GENOME REANNOTATION</scope>
</reference>
<reference key="3">
    <citation type="journal article" date="2003" name="J. Gen. Virol.">
        <authorList>
            <person name="Davison A.J."/>
            <person name="Dolan A."/>
            <person name="Akter P."/>
            <person name="Addison C."/>
            <person name="Dargan D.J."/>
            <person name="Alcendor D.J."/>
            <person name="McGeoch D.J."/>
            <person name="Hayward G.S."/>
        </authorList>
    </citation>
    <scope>ERRATUM OF PUBMED:12533697</scope>
</reference>
<reference key="4">
    <citation type="journal article" date="2004" name="J. Virol.">
        <title>Identification of proteins in human cytomegalovirus (HCMV) particles: the HCMV proteome.</title>
        <authorList>
            <person name="Varnum S.M."/>
            <person name="Streblow D.N."/>
            <person name="Monroe M.E."/>
            <person name="Smith P."/>
            <person name="Auberry K.J."/>
            <person name="Pasa-Tolic L."/>
            <person name="Wang D."/>
            <person name="Camp D.G. II"/>
            <person name="Rodland K."/>
            <person name="Wiley S."/>
            <person name="Britt W."/>
            <person name="Shenk T."/>
            <person name="Smith R.D."/>
            <person name="Nelson J.A."/>
        </authorList>
    </citation>
    <scope>IDENTIFICATION</scope>
</reference>
<reference key="5">
    <citation type="journal article" date="2004" name="J. Virol.">
        <authorList>
            <person name="Varnum S.M."/>
            <person name="Streblow D.N."/>
            <person name="Monroe M.E."/>
            <person name="Smith P."/>
            <person name="Auberry K.J."/>
            <person name="Pasa-Tolic L."/>
            <person name="Wang D."/>
            <person name="Camp D.G. II"/>
            <person name="Rodland K."/>
            <person name="Wiley S."/>
            <person name="Britt W."/>
            <person name="Shenk T."/>
            <person name="Smith R.D."/>
            <person name="Nelson J.A."/>
        </authorList>
    </citation>
    <scope>ERRATUM OF PUBMED:15452216</scope>
</reference>
<name>CVC2_HCMVA</name>
<proteinExistence type="evidence at protein level"/>
<keyword id="KW-0002">3D-structure</keyword>
<keyword id="KW-0167">Capsid protein</keyword>
<keyword id="KW-1048">Host nucleus</keyword>
<keyword id="KW-0945">Host-virus interaction</keyword>
<keyword id="KW-1185">Reference proteome</keyword>
<keyword id="KW-0231">Viral genome packaging</keyword>
<keyword id="KW-1163">Viral penetration into host nucleus</keyword>
<keyword id="KW-1188">Viral release from host cell</keyword>
<keyword id="KW-0946">Virion</keyword>
<keyword id="KW-1160">Virus entry into host cell</keyword>
<evidence type="ECO:0000255" key="1">
    <source>
        <dbReference type="HAMAP-Rule" id="MF_04025"/>
    </source>
</evidence>
<evidence type="ECO:0000256" key="2">
    <source>
        <dbReference type="SAM" id="MobiDB-lite"/>
    </source>
</evidence>
<evidence type="ECO:0007829" key="3">
    <source>
        <dbReference type="PDB" id="7NXP"/>
    </source>
</evidence>
<evidence type="ECO:0007829" key="4">
    <source>
        <dbReference type="PDB" id="8TES"/>
    </source>
</evidence>
<organismHost>
    <name type="scientific">Homo sapiens</name>
    <name type="common">Human</name>
    <dbReference type="NCBI Taxonomy" id="9606"/>
</organismHost>
<organism>
    <name type="scientific">Human cytomegalovirus (strain AD169)</name>
    <name type="common">HHV-5</name>
    <name type="synonym">Human herpesvirus 5</name>
    <dbReference type="NCBI Taxonomy" id="10360"/>
    <lineage>
        <taxon>Viruses</taxon>
        <taxon>Duplodnaviria</taxon>
        <taxon>Heunggongvirae</taxon>
        <taxon>Peploviricota</taxon>
        <taxon>Herviviricetes</taxon>
        <taxon>Herpesvirales</taxon>
        <taxon>Orthoherpesviridae</taxon>
        <taxon>Betaherpesvirinae</taxon>
        <taxon>Cytomegalovirus</taxon>
        <taxon>Cytomegalovirus humanbeta5</taxon>
        <taxon>Human cytomegalovirus</taxon>
    </lineage>
</organism>
<dbReference type="EMBL" id="X17403">
    <property type="protein sequence ID" value="CAA35392.1"/>
    <property type="molecule type" value="Genomic_DNA"/>
</dbReference>
<dbReference type="EMBL" id="BK000394">
    <property type="protein sequence ID" value="DAA00173.1"/>
    <property type="molecule type" value="Genomic_DNA"/>
</dbReference>
<dbReference type="PIR" id="S09840">
    <property type="entry name" value="QQBEB5"/>
</dbReference>
<dbReference type="PDB" id="7ET3">
    <property type="method" value="EM"/>
    <property type="resolution" value="4.20 A"/>
    <property type="chains" value="N/O=1-642"/>
</dbReference>
<dbReference type="PDB" id="7NXP">
    <property type="method" value="X-ray"/>
    <property type="resolution" value="1.90 A"/>
    <property type="chains" value="A=180-642"/>
</dbReference>
<dbReference type="PDB" id="8TEP">
    <property type="method" value="EM"/>
    <property type="resolution" value="3.50 A"/>
    <property type="chains" value="E/F=1-642"/>
</dbReference>
<dbReference type="PDB" id="8TES">
    <property type="method" value="EM"/>
    <property type="resolution" value="3.27 A"/>
    <property type="chains" value="E/F=1-642"/>
</dbReference>
<dbReference type="PDB" id="8TET">
    <property type="method" value="EM"/>
    <property type="resolution" value="4.26 A"/>
    <property type="chains" value="E/F=1-642"/>
</dbReference>
<dbReference type="PDB" id="8TEU">
    <property type="method" value="EM"/>
    <property type="resolution" value="4.01 A"/>
    <property type="chains" value="E/F=1-642"/>
</dbReference>
<dbReference type="PDB" id="8TEW">
    <property type="method" value="EM"/>
    <property type="resolution" value="3.02 A"/>
    <property type="chains" value="E/F=1-642"/>
</dbReference>
<dbReference type="PDBsum" id="7ET3"/>
<dbReference type="PDBsum" id="7NXP"/>
<dbReference type="PDBsum" id="8TEP"/>
<dbReference type="PDBsum" id="8TES"/>
<dbReference type="PDBsum" id="8TET"/>
<dbReference type="PDBsum" id="8TEU"/>
<dbReference type="PDBsum" id="8TEW"/>
<dbReference type="EMDB" id="EMD-41194"/>
<dbReference type="EMDB" id="EMD-41200"/>
<dbReference type="EMDB" id="EMD-41201"/>
<dbReference type="EMDB" id="EMD-41202"/>
<dbReference type="EMDB" id="EMD-41204"/>
<dbReference type="SMR" id="P16726"/>
<dbReference type="Proteomes" id="UP000008991">
    <property type="component" value="Segment"/>
</dbReference>
<dbReference type="Proteomes" id="UP000008992">
    <property type="component" value="Segment"/>
</dbReference>
<dbReference type="GO" id="GO:0043657">
    <property type="term" value="C:host cell"/>
    <property type="evidence" value="ECO:0007669"/>
    <property type="project" value="GOC"/>
</dbReference>
<dbReference type="GO" id="GO:0042025">
    <property type="term" value="C:host cell nucleus"/>
    <property type="evidence" value="ECO:0007669"/>
    <property type="project" value="UniProtKB-SubCell"/>
</dbReference>
<dbReference type="GO" id="GO:0019028">
    <property type="term" value="C:viral capsid"/>
    <property type="evidence" value="ECO:0007669"/>
    <property type="project" value="UniProtKB-KW"/>
</dbReference>
<dbReference type="GO" id="GO:0046718">
    <property type="term" value="P:symbiont entry into host cell"/>
    <property type="evidence" value="ECO:0007669"/>
    <property type="project" value="UniProtKB-KW"/>
</dbReference>
<dbReference type="GO" id="GO:0019073">
    <property type="term" value="P:viral DNA genome packaging"/>
    <property type="evidence" value="ECO:0000315"/>
    <property type="project" value="CACAO"/>
</dbReference>
<dbReference type="GO" id="GO:0075732">
    <property type="term" value="P:viral penetration into host nucleus"/>
    <property type="evidence" value="ECO:0007669"/>
    <property type="project" value="UniProtKB-KW"/>
</dbReference>
<dbReference type="HAMAP" id="MF_04025">
    <property type="entry name" value="HSV_CVC2"/>
    <property type="match status" value="1"/>
</dbReference>
<dbReference type="InterPro" id="IPR002493">
    <property type="entry name" value="Herpes_UL25"/>
</dbReference>
<dbReference type="Pfam" id="PF01499">
    <property type="entry name" value="Herpes_UL25"/>
    <property type="match status" value="1"/>
</dbReference>
<sequence>MSLLHTFWRLPVAVFFEPHEENVLRCPERVLRRLLEDAAVTMRGGGWREDVLMDRVRKRYLRQELRDLGHRVQTYCEDLEGRVSEAEALLNQQCELDEGPSPRTLLQPPCRPRSSSPGTGVAGASAVPHGLYSRHDAITGPAAAPSDVVAPSDAVAASAAAGASSTWLAQCAERPLPGNVPSYFGITQNDPFIRFHTDFRGEVVNTMFENASTWTFSFGIWYYRLKRGLYTQPRWKRVYHLAQMDNFSISQELLLGVVNALENVTVYPTYDCVLSDLEAAACLLAAYGHALWEGRDPPDSVATVLGELPQLLPRLADDVSREIAAWEGPVAAGNNYYAYRDSPDLRYYMPLSGGRHYHPGTFDRHVLVRLFHKRGVIQHLPGYGTITEELVQERLSGQVRDDVLSLWSRRLLVGKLGRDVPVFVHEQQYLRSGLTCLAGLLLLWKVTNADSVFAPRTGKFTLADLLGSDAVAGGGLPGGRAGGEEEGYGGRHGRVRNFEFLVRYYIGPWYARDPAVTLSQLFPGLALLAVTESVRSGWDPSRREDSAGGGDGGGAVLMQLSKSNPVADYMFAQSSKQYGDLRRLEVHDALLFHYEHGLGRLLSVTLPRHRVSTLGSSLFNVNDIYELLYFLVLGFLPSVAVL</sequence>